<accession>B0CE36</accession>
<proteinExistence type="inferred from homology"/>
<reference key="1">
    <citation type="journal article" date="2008" name="Proc. Natl. Acad. Sci. U.S.A.">
        <title>Niche adaptation and genome expansion in the chlorophyll d-producing cyanobacterium Acaryochloris marina.</title>
        <authorList>
            <person name="Swingley W.D."/>
            <person name="Chen M."/>
            <person name="Cheung P.C."/>
            <person name="Conrad A.L."/>
            <person name="Dejesa L.C."/>
            <person name="Hao J."/>
            <person name="Honchak B.M."/>
            <person name="Karbach L.E."/>
            <person name="Kurdoglu A."/>
            <person name="Lahiri S."/>
            <person name="Mastrian S.D."/>
            <person name="Miyashita H."/>
            <person name="Page L."/>
            <person name="Ramakrishna P."/>
            <person name="Satoh S."/>
            <person name="Sattley W.M."/>
            <person name="Shimada Y."/>
            <person name="Taylor H.L."/>
            <person name="Tomo T."/>
            <person name="Tsuchiya T."/>
            <person name="Wang Z.T."/>
            <person name="Raymond J."/>
            <person name="Mimuro M."/>
            <person name="Blankenship R.E."/>
            <person name="Touchman J.W."/>
        </authorList>
    </citation>
    <scope>NUCLEOTIDE SEQUENCE [LARGE SCALE GENOMIC DNA]</scope>
    <source>
        <strain>MBIC 11017</strain>
    </source>
</reference>
<gene>
    <name evidence="1" type="primary">rpsU</name>
    <name evidence="1" type="synonym">rps21</name>
    <name type="ordered locus">AM1_5556</name>
</gene>
<protein>
    <recommendedName>
        <fullName evidence="1">Small ribosomal subunit protein bS21</fullName>
    </recommendedName>
    <alternativeName>
        <fullName evidence="2">30S ribosomal protein S21</fullName>
    </alternativeName>
</protein>
<sequence length="59" mass="7132">MVQVVLGEDEGIESALRRFKRQVSKAGILADVKRRRHFETPLEKKKRKRIATRRKRRFR</sequence>
<keyword id="KW-1185">Reference proteome</keyword>
<keyword id="KW-0687">Ribonucleoprotein</keyword>
<keyword id="KW-0689">Ribosomal protein</keyword>
<dbReference type="EMBL" id="CP000828">
    <property type="protein sequence ID" value="ABW30510.1"/>
    <property type="molecule type" value="Genomic_DNA"/>
</dbReference>
<dbReference type="RefSeq" id="WP_010476866.1">
    <property type="nucleotide sequence ID" value="NC_009925.1"/>
</dbReference>
<dbReference type="SMR" id="B0CE36"/>
<dbReference type="STRING" id="329726.AM1_5556"/>
<dbReference type="KEGG" id="amr:AM1_5556"/>
<dbReference type="eggNOG" id="COG0828">
    <property type="taxonomic scope" value="Bacteria"/>
</dbReference>
<dbReference type="HOGENOM" id="CLU_159258_3_1_3"/>
<dbReference type="OrthoDB" id="9799244at2"/>
<dbReference type="Proteomes" id="UP000000268">
    <property type="component" value="Chromosome"/>
</dbReference>
<dbReference type="GO" id="GO:1990904">
    <property type="term" value="C:ribonucleoprotein complex"/>
    <property type="evidence" value="ECO:0007669"/>
    <property type="project" value="UniProtKB-KW"/>
</dbReference>
<dbReference type="GO" id="GO:0005840">
    <property type="term" value="C:ribosome"/>
    <property type="evidence" value="ECO:0007669"/>
    <property type="project" value="UniProtKB-KW"/>
</dbReference>
<dbReference type="GO" id="GO:0003735">
    <property type="term" value="F:structural constituent of ribosome"/>
    <property type="evidence" value="ECO:0007669"/>
    <property type="project" value="InterPro"/>
</dbReference>
<dbReference type="GO" id="GO:0006412">
    <property type="term" value="P:translation"/>
    <property type="evidence" value="ECO:0007669"/>
    <property type="project" value="UniProtKB-UniRule"/>
</dbReference>
<dbReference type="Gene3D" id="1.20.5.1150">
    <property type="entry name" value="Ribosomal protein S8"/>
    <property type="match status" value="1"/>
</dbReference>
<dbReference type="HAMAP" id="MF_00358">
    <property type="entry name" value="Ribosomal_bS21"/>
    <property type="match status" value="1"/>
</dbReference>
<dbReference type="InterPro" id="IPR001911">
    <property type="entry name" value="Ribosomal_bS21"/>
</dbReference>
<dbReference type="InterPro" id="IPR018278">
    <property type="entry name" value="Ribosomal_bS21_CS"/>
</dbReference>
<dbReference type="InterPro" id="IPR038380">
    <property type="entry name" value="Ribosomal_bS21_sf"/>
</dbReference>
<dbReference type="NCBIfam" id="TIGR00030">
    <property type="entry name" value="S21p"/>
    <property type="match status" value="1"/>
</dbReference>
<dbReference type="PANTHER" id="PTHR21109">
    <property type="entry name" value="MITOCHONDRIAL 28S RIBOSOMAL PROTEIN S21"/>
    <property type="match status" value="1"/>
</dbReference>
<dbReference type="PANTHER" id="PTHR21109:SF0">
    <property type="entry name" value="SMALL RIBOSOMAL SUBUNIT PROTEIN BS21M"/>
    <property type="match status" value="1"/>
</dbReference>
<dbReference type="Pfam" id="PF01165">
    <property type="entry name" value="Ribosomal_S21"/>
    <property type="match status" value="1"/>
</dbReference>
<dbReference type="PRINTS" id="PR00976">
    <property type="entry name" value="RIBOSOMALS21"/>
</dbReference>
<dbReference type="PROSITE" id="PS01181">
    <property type="entry name" value="RIBOSOMAL_S21"/>
    <property type="match status" value="1"/>
</dbReference>
<feature type="chain" id="PRO_1000079394" description="Small ribosomal subunit protein bS21">
    <location>
        <begin position="1"/>
        <end position="59"/>
    </location>
</feature>
<comment type="similarity">
    <text evidence="1">Belongs to the bacterial ribosomal protein bS21 family.</text>
</comment>
<organism>
    <name type="scientific">Acaryochloris marina (strain MBIC 11017)</name>
    <dbReference type="NCBI Taxonomy" id="329726"/>
    <lineage>
        <taxon>Bacteria</taxon>
        <taxon>Bacillati</taxon>
        <taxon>Cyanobacteriota</taxon>
        <taxon>Cyanophyceae</taxon>
        <taxon>Acaryochloridales</taxon>
        <taxon>Acaryochloridaceae</taxon>
        <taxon>Acaryochloris</taxon>
    </lineage>
</organism>
<evidence type="ECO:0000255" key="1">
    <source>
        <dbReference type="HAMAP-Rule" id="MF_00358"/>
    </source>
</evidence>
<evidence type="ECO:0000305" key="2"/>
<name>RS21_ACAM1</name>